<proteinExistence type="predicted"/>
<sequence>MGGGGMKKIVLALLLLLLPVVCGDVSVYKVWSPYDPPNSPILHVDISEQVLYLGVVNKDEYEHDVIVKVECNGKTWGSGLIPLPPNSHIEKIVEVRVPISDDKEHDAKISLIENGKTIASTTVKVRPYFPVDVKNVTCEDSYKIGNTEVCYSNWFDITLKSNPTAKSDYIAKVWINVKDGDNIIYNGKNDFKTVYIPLGEEVTVSFKVPKIVLDKEKFTVETNVEIMNVTHTIDGVEETIQRRDDSGIYYDYKSVTKYYYFPVVIKNVELYRKIDENTSEFVKNFYDSANILDDEIRDILSDKYLQKDDVLPRYYVIDDPTLAILKITVENKYDRDVKAKLTVKYDNVIFTKIINIDKKEKKDVFIPIYTKKGSKNIVVTINPIDADTLIFNRSYSINIDPKPIPPVIIEKIILPKDEEIGEETNISGYVIIGKRYNMTIFIKNIYNKTLSGKITIDDNFKDGIANYSKEIPFTIEPHQIKEINVPIIFYKEVNGDLKITVSVKGGAKDYTSLAHFYAISPIGIVRIYYNNTLLLGKINVIKENSGIYSAKPIAGFNNTCVVILRNNLNSKVDCDVWIEVIDKDGKVRAKSGIKTVKLDNYSEAKVAFPIFFEEGFEGYTVAHIIPKSVENVDIIYTEVMEST</sequence>
<feature type="chain" id="PRO_0000107095" description="Uncharacterized protein MJ0903">
    <location>
        <begin position="1"/>
        <end position="643"/>
    </location>
</feature>
<feature type="transmembrane region" description="Helical" evidence="1">
    <location>
        <begin position="9"/>
        <end position="29"/>
    </location>
</feature>
<gene>
    <name type="ordered locus">MJ0903</name>
</gene>
<dbReference type="EMBL" id="L77117">
    <property type="protein sequence ID" value="AAB98908.1"/>
    <property type="molecule type" value="Genomic_DNA"/>
</dbReference>
<dbReference type="PIR" id="G64412">
    <property type="entry name" value="G64412"/>
</dbReference>
<dbReference type="FunCoup" id="Q58313">
    <property type="interactions" value="8"/>
</dbReference>
<dbReference type="STRING" id="243232.MJ_0903"/>
<dbReference type="PaxDb" id="243232-MJ_0903"/>
<dbReference type="EnsemblBacteria" id="AAB98908">
    <property type="protein sequence ID" value="AAB98908"/>
    <property type="gene ID" value="MJ_0903"/>
</dbReference>
<dbReference type="KEGG" id="mja:MJ_0903"/>
<dbReference type="eggNOG" id="arCOG05057">
    <property type="taxonomic scope" value="Archaea"/>
</dbReference>
<dbReference type="HOGENOM" id="CLU_015662_0_0_2"/>
<dbReference type="InParanoid" id="Q58313"/>
<dbReference type="OrthoDB" id="65851at2157"/>
<dbReference type="Proteomes" id="UP000000805">
    <property type="component" value="Chromosome"/>
</dbReference>
<dbReference type="GO" id="GO:0016020">
    <property type="term" value="C:membrane"/>
    <property type="evidence" value="ECO:0007669"/>
    <property type="project" value="UniProtKB-SubCell"/>
</dbReference>
<accession>Q58313</accession>
<keyword id="KW-0472">Membrane</keyword>
<keyword id="KW-1185">Reference proteome</keyword>
<keyword id="KW-0812">Transmembrane</keyword>
<keyword id="KW-1133">Transmembrane helix</keyword>
<evidence type="ECO:0000255" key="1"/>
<evidence type="ECO:0000305" key="2"/>
<organism>
    <name type="scientific">Methanocaldococcus jannaschii (strain ATCC 43067 / DSM 2661 / JAL-1 / JCM 10045 / NBRC 100440)</name>
    <name type="common">Methanococcus jannaschii</name>
    <dbReference type="NCBI Taxonomy" id="243232"/>
    <lineage>
        <taxon>Archaea</taxon>
        <taxon>Methanobacteriati</taxon>
        <taxon>Methanobacteriota</taxon>
        <taxon>Methanomada group</taxon>
        <taxon>Methanococci</taxon>
        <taxon>Methanococcales</taxon>
        <taxon>Methanocaldococcaceae</taxon>
        <taxon>Methanocaldococcus</taxon>
    </lineage>
</organism>
<name>Y903_METJA</name>
<reference key="1">
    <citation type="journal article" date="1996" name="Science">
        <title>Complete genome sequence of the methanogenic archaeon, Methanococcus jannaschii.</title>
        <authorList>
            <person name="Bult C.J."/>
            <person name="White O."/>
            <person name="Olsen G.J."/>
            <person name="Zhou L."/>
            <person name="Fleischmann R.D."/>
            <person name="Sutton G.G."/>
            <person name="Blake J.A."/>
            <person name="FitzGerald L.M."/>
            <person name="Clayton R.A."/>
            <person name="Gocayne J.D."/>
            <person name="Kerlavage A.R."/>
            <person name="Dougherty B.A."/>
            <person name="Tomb J.-F."/>
            <person name="Adams M.D."/>
            <person name="Reich C.I."/>
            <person name="Overbeek R."/>
            <person name="Kirkness E.F."/>
            <person name="Weinstock K.G."/>
            <person name="Merrick J.M."/>
            <person name="Glodek A."/>
            <person name="Scott J.L."/>
            <person name="Geoghagen N.S.M."/>
            <person name="Weidman J.F."/>
            <person name="Fuhrmann J.L."/>
            <person name="Nguyen D."/>
            <person name="Utterback T.R."/>
            <person name="Kelley J.M."/>
            <person name="Peterson J.D."/>
            <person name="Sadow P.W."/>
            <person name="Hanna M.C."/>
            <person name="Cotton M.D."/>
            <person name="Roberts K.M."/>
            <person name="Hurst M.A."/>
            <person name="Kaine B.P."/>
            <person name="Borodovsky M."/>
            <person name="Klenk H.-P."/>
            <person name="Fraser C.M."/>
            <person name="Smith H.O."/>
            <person name="Woese C.R."/>
            <person name="Venter J.C."/>
        </authorList>
    </citation>
    <scope>NUCLEOTIDE SEQUENCE [LARGE SCALE GENOMIC DNA]</scope>
    <source>
        <strain>ATCC 43067 / DSM 2661 / JAL-1 / JCM 10045 / NBRC 100440</strain>
    </source>
</reference>
<protein>
    <recommendedName>
        <fullName>Uncharacterized protein MJ0903</fullName>
    </recommendedName>
</protein>
<comment type="subcellular location">
    <subcellularLocation>
        <location evidence="2">Membrane</location>
        <topology evidence="2">Single-pass membrane protein</topology>
    </subcellularLocation>
</comment>